<organism>
    <name type="scientific">Synechococcus sp. (strain WH7803)</name>
    <dbReference type="NCBI Taxonomy" id="32051"/>
    <lineage>
        <taxon>Bacteria</taxon>
        <taxon>Bacillati</taxon>
        <taxon>Cyanobacteriota</taxon>
        <taxon>Cyanophyceae</taxon>
        <taxon>Synechococcales</taxon>
        <taxon>Synechococcaceae</taxon>
        <taxon>Synechococcus</taxon>
    </lineage>
</organism>
<feature type="chain" id="PRO_1000064790" description="Ribosome maturation factor RimP">
    <location>
        <begin position="1"/>
        <end position="155"/>
    </location>
</feature>
<dbReference type="EMBL" id="CT971583">
    <property type="protein sequence ID" value="CAK24502.1"/>
    <property type="molecule type" value="Genomic_DNA"/>
</dbReference>
<dbReference type="SMR" id="A5GNI7"/>
<dbReference type="STRING" id="32051.SynWH7803_2076"/>
<dbReference type="KEGG" id="syx:SynWH7803_2076"/>
<dbReference type="eggNOG" id="COG0779">
    <property type="taxonomic scope" value="Bacteria"/>
</dbReference>
<dbReference type="HOGENOM" id="CLU_070525_2_1_3"/>
<dbReference type="OrthoDB" id="9805006at2"/>
<dbReference type="Proteomes" id="UP000001566">
    <property type="component" value="Chromosome"/>
</dbReference>
<dbReference type="GO" id="GO:0005829">
    <property type="term" value="C:cytosol"/>
    <property type="evidence" value="ECO:0007669"/>
    <property type="project" value="TreeGrafter"/>
</dbReference>
<dbReference type="GO" id="GO:0000028">
    <property type="term" value="P:ribosomal small subunit assembly"/>
    <property type="evidence" value="ECO:0007669"/>
    <property type="project" value="TreeGrafter"/>
</dbReference>
<dbReference type="GO" id="GO:0006412">
    <property type="term" value="P:translation"/>
    <property type="evidence" value="ECO:0007669"/>
    <property type="project" value="TreeGrafter"/>
</dbReference>
<dbReference type="Gene3D" id="3.30.300.70">
    <property type="entry name" value="RimP-like superfamily, N-terminal"/>
    <property type="match status" value="1"/>
</dbReference>
<dbReference type="HAMAP" id="MF_01077">
    <property type="entry name" value="RimP"/>
    <property type="match status" value="1"/>
</dbReference>
<dbReference type="InterPro" id="IPR003728">
    <property type="entry name" value="Ribosome_maturation_RimP"/>
</dbReference>
<dbReference type="InterPro" id="IPR028989">
    <property type="entry name" value="RimP_N"/>
</dbReference>
<dbReference type="InterPro" id="IPR035956">
    <property type="entry name" value="RimP_N_sf"/>
</dbReference>
<dbReference type="NCBIfam" id="NF011227">
    <property type="entry name" value="PRK14634.1"/>
    <property type="match status" value="1"/>
</dbReference>
<dbReference type="PANTHER" id="PTHR33867">
    <property type="entry name" value="RIBOSOME MATURATION FACTOR RIMP"/>
    <property type="match status" value="1"/>
</dbReference>
<dbReference type="PANTHER" id="PTHR33867:SF1">
    <property type="entry name" value="RIBOSOME MATURATION FACTOR RIMP"/>
    <property type="match status" value="1"/>
</dbReference>
<dbReference type="Pfam" id="PF02576">
    <property type="entry name" value="RimP_N"/>
    <property type="match status" value="1"/>
</dbReference>
<dbReference type="SUPFAM" id="SSF75420">
    <property type="entry name" value="YhbC-like, N-terminal domain"/>
    <property type="match status" value="1"/>
</dbReference>
<evidence type="ECO:0000255" key="1">
    <source>
        <dbReference type="HAMAP-Rule" id="MF_01077"/>
    </source>
</evidence>
<name>RIMP_SYNPW</name>
<proteinExistence type="inferred from homology"/>
<keyword id="KW-0963">Cytoplasm</keyword>
<keyword id="KW-1185">Reference proteome</keyword>
<keyword id="KW-0690">Ribosome biogenesis</keyword>
<reference key="1">
    <citation type="submission" date="2006-05" db="EMBL/GenBank/DDBJ databases">
        <authorList>
            <consortium name="Genoscope"/>
        </authorList>
    </citation>
    <scope>NUCLEOTIDE SEQUENCE [LARGE SCALE GENOMIC DNA]</scope>
    <source>
        <strain>WH7803</strain>
    </source>
</reference>
<sequence>MPHPLLPDITPVAASTAAAHGFELVEIQILTHLQPMTVQVQIRRTDGSDVSLDDCAGFSGPMGEALESQALLTEAYVLEISSPGIGEQLQSDRDFQTFRSYPVEVLYRDDEGREQRQQGSLLERNADHVQVNVRGRIKRIARASVISVQLISPTG</sequence>
<comment type="function">
    <text evidence="1">Required for maturation of 30S ribosomal subunits.</text>
</comment>
<comment type="subcellular location">
    <subcellularLocation>
        <location evidence="1">Cytoplasm</location>
    </subcellularLocation>
</comment>
<comment type="similarity">
    <text evidence="1">Belongs to the RimP family.</text>
</comment>
<protein>
    <recommendedName>
        <fullName evidence="1">Ribosome maturation factor RimP</fullName>
    </recommendedName>
</protein>
<accession>A5GNI7</accession>
<gene>
    <name evidence="1" type="primary">rimP</name>
    <name type="ordered locus">SynWH7803_2076</name>
</gene>